<evidence type="ECO:0000250" key="1">
    <source>
        <dbReference type="UniProtKB" id="B3PJ79"/>
    </source>
</evidence>
<evidence type="ECO:0000250" key="2">
    <source>
        <dbReference type="UniProtKB" id="O83009"/>
    </source>
</evidence>
<evidence type="ECO:0000255" key="3"/>
<evidence type="ECO:0000255" key="4">
    <source>
        <dbReference type="PROSITE-ProRule" id="PRU00498"/>
    </source>
</evidence>
<evidence type="ECO:0000256" key="5">
    <source>
        <dbReference type="SAM" id="MobiDB-lite"/>
    </source>
</evidence>
<evidence type="ECO:0000269" key="6">
    <source>
    </source>
</evidence>
<evidence type="ECO:0000303" key="7">
    <source>
    </source>
</evidence>
<evidence type="ECO:0000305" key="8"/>
<evidence type="ECO:0000305" key="9">
    <source>
    </source>
</evidence>
<keyword id="KW-0119">Carbohydrate metabolism</keyword>
<keyword id="KW-0146">Chitin degradation</keyword>
<keyword id="KW-0186">Copper</keyword>
<keyword id="KW-1015">Disulfide bond</keyword>
<keyword id="KW-0325">Glycoprotein</keyword>
<keyword id="KW-0479">Metal-binding</keyword>
<keyword id="KW-0503">Monooxygenase</keyword>
<keyword id="KW-0560">Oxidoreductase</keyword>
<keyword id="KW-0624">Polysaccharide degradation</keyword>
<keyword id="KW-1185">Reference proteome</keyword>
<keyword id="KW-0964">Secreted</keyword>
<keyword id="KW-0732">Signal</keyword>
<proteinExistence type="evidence at protein level"/>
<sequence length="326" mass="34175">MVFSNSNASVSLFRLVALVATLSHLVFTFVDAHGYVTFPASRAYMCKQGQAKNCGEIQYEPQSVEAPKGLPFARKGDGQLCSAGLGQFSQLDRQGPSAWPTTKASGVHSFSWTFTAQHATTDFKYFITKANWDSSKTSGLSASDLESDPFLTVSMNGKAPPRTMNHDLSKAMPSRSGYHVVYAVWTVDNTANAFYQCLDLDFGGGNSSSSSSSSNSSATSTTGSSSAASAATSSTTSSSVSESGTASTASGSGSDDDSSSSGDSSNGSSSDNNGGSSGSTTMPKSQIAQSGACRMKKRRRSPNASVLAARGDYRRHKSQMRRDRQG</sequence>
<reference key="1">
    <citation type="journal article" date="2006" name="Nature">
        <title>Insights from the genome of the biotrophic fungal plant pathogen Ustilago maydis.</title>
        <authorList>
            <person name="Kaemper J."/>
            <person name="Kahmann R."/>
            <person name="Boelker M."/>
            <person name="Ma L.-J."/>
            <person name="Brefort T."/>
            <person name="Saville B.J."/>
            <person name="Banuett F."/>
            <person name="Kronstad J.W."/>
            <person name="Gold S.E."/>
            <person name="Mueller O."/>
            <person name="Perlin M.H."/>
            <person name="Woesten H.A.B."/>
            <person name="de Vries R."/>
            <person name="Ruiz-Herrera J."/>
            <person name="Reynaga-Pena C.G."/>
            <person name="Snetselaar K."/>
            <person name="McCann M."/>
            <person name="Perez-Martin J."/>
            <person name="Feldbruegge M."/>
            <person name="Basse C.W."/>
            <person name="Steinberg G."/>
            <person name="Ibeas J.I."/>
            <person name="Holloman W."/>
            <person name="Guzman P."/>
            <person name="Farman M.L."/>
            <person name="Stajich J.E."/>
            <person name="Sentandreu R."/>
            <person name="Gonzalez-Prieto J.M."/>
            <person name="Kennell J.C."/>
            <person name="Molina L."/>
            <person name="Schirawski J."/>
            <person name="Mendoza-Mendoza A."/>
            <person name="Greilinger D."/>
            <person name="Muench K."/>
            <person name="Roessel N."/>
            <person name="Scherer M."/>
            <person name="Vranes M."/>
            <person name="Ladendorf O."/>
            <person name="Vincon V."/>
            <person name="Fuchs U."/>
            <person name="Sandrock B."/>
            <person name="Meng S."/>
            <person name="Ho E.C.H."/>
            <person name="Cahill M.J."/>
            <person name="Boyce K.J."/>
            <person name="Klose J."/>
            <person name="Klosterman S.J."/>
            <person name="Deelstra H.J."/>
            <person name="Ortiz-Castellanos L."/>
            <person name="Li W."/>
            <person name="Sanchez-Alonso P."/>
            <person name="Schreier P.H."/>
            <person name="Haeuser-Hahn I."/>
            <person name="Vaupel M."/>
            <person name="Koopmann E."/>
            <person name="Friedrich G."/>
            <person name="Voss H."/>
            <person name="Schlueter T."/>
            <person name="Margolis J."/>
            <person name="Platt D."/>
            <person name="Swimmer C."/>
            <person name="Gnirke A."/>
            <person name="Chen F."/>
            <person name="Vysotskaia V."/>
            <person name="Mannhaupt G."/>
            <person name="Gueldener U."/>
            <person name="Muensterkoetter M."/>
            <person name="Haase D."/>
            <person name="Oesterheld M."/>
            <person name="Mewes H.-W."/>
            <person name="Mauceli E.W."/>
            <person name="DeCaprio D."/>
            <person name="Wade C.M."/>
            <person name="Butler J."/>
            <person name="Young S.K."/>
            <person name="Jaffe D.B."/>
            <person name="Calvo S.E."/>
            <person name="Nusbaum C."/>
            <person name="Galagan J.E."/>
            <person name="Birren B.W."/>
        </authorList>
    </citation>
    <scope>NUCLEOTIDE SEQUENCE [LARGE SCALE GENOMIC DNA]</scope>
    <source>
        <strain>DSM 14603 / FGSC 9021 / UM521</strain>
    </source>
</reference>
<reference key="2">
    <citation type="submission" date="2014-09" db="EMBL/GenBank/DDBJ databases">
        <authorList>
            <person name="Gueldener U."/>
            <person name="Muensterkoetter M."/>
            <person name="Walter M.C."/>
            <person name="Mannhaupt G."/>
            <person name="Kahmann R."/>
        </authorList>
    </citation>
    <scope>GENOME REANNOTATION</scope>
    <source>
        <strain>DSM 14603 / FGSC 9021 / UM521</strain>
    </source>
</reference>
<reference key="3">
    <citation type="journal article" date="2023" name="Appl. Environ. Microbiol.">
        <title>The Ustilago maydis AA10 LPMO is active on fungal cell wall chitin.</title>
        <authorList>
            <person name="Yao R.A."/>
            <person name="Reyre J.L."/>
            <person name="Tamburrini K.C."/>
            <person name="Haon M."/>
            <person name="Tranquet O."/>
            <person name="Nalubothula A."/>
            <person name="Mukherjee S."/>
            <person name="Le Gall S."/>
            <person name="Grisel S."/>
            <person name="Longhi S."/>
            <person name="Madhuprakash J."/>
            <person name="Bissaro B."/>
            <person name="Berrin J.G."/>
        </authorList>
    </citation>
    <scope>FUNCTION</scope>
    <scope>CATALYTIC ACTIVITY</scope>
</reference>
<dbReference type="EC" id="1.14.99.-" evidence="6"/>
<dbReference type="EMBL" id="CM003157">
    <property type="protein sequence ID" value="KIS66448.1"/>
    <property type="molecule type" value="Genomic_DNA"/>
</dbReference>
<dbReference type="RefSeq" id="XP_011391789.1">
    <property type="nucleotide sequence ID" value="XM_011393487.1"/>
</dbReference>
<dbReference type="SMR" id="A0A0D1CHL0"/>
<dbReference type="STRING" id="237631.A0A0D1CHL0"/>
<dbReference type="EnsemblFungi" id="KIS66448">
    <property type="protein sequence ID" value="KIS66448"/>
    <property type="gene ID" value="UMAG_05439"/>
</dbReference>
<dbReference type="GeneID" id="23565338"/>
<dbReference type="KEGG" id="uma:UMAG_05439"/>
<dbReference type="VEuPathDB" id="FungiDB:UMAG_05439"/>
<dbReference type="eggNOG" id="ENOG502SAGA">
    <property type="taxonomic scope" value="Eukaryota"/>
</dbReference>
<dbReference type="InParanoid" id="A0A0D1CHL0"/>
<dbReference type="OMA" id="YYSCSDL"/>
<dbReference type="OrthoDB" id="2550057at2759"/>
<dbReference type="Proteomes" id="UP000000561">
    <property type="component" value="Chromosome 18"/>
</dbReference>
<dbReference type="GO" id="GO:0005576">
    <property type="term" value="C:extracellular region"/>
    <property type="evidence" value="ECO:0007669"/>
    <property type="project" value="UniProtKB-SubCell"/>
</dbReference>
<dbReference type="GO" id="GO:0046872">
    <property type="term" value="F:metal ion binding"/>
    <property type="evidence" value="ECO:0007669"/>
    <property type="project" value="UniProtKB-KW"/>
</dbReference>
<dbReference type="GO" id="GO:0004497">
    <property type="term" value="F:monooxygenase activity"/>
    <property type="evidence" value="ECO:0007669"/>
    <property type="project" value="UniProtKB-KW"/>
</dbReference>
<dbReference type="GO" id="GO:0006032">
    <property type="term" value="P:chitin catabolic process"/>
    <property type="evidence" value="ECO:0007669"/>
    <property type="project" value="UniProtKB-KW"/>
</dbReference>
<dbReference type="GO" id="GO:0000272">
    <property type="term" value="P:polysaccharide catabolic process"/>
    <property type="evidence" value="ECO:0007669"/>
    <property type="project" value="UniProtKB-KW"/>
</dbReference>
<dbReference type="CDD" id="cd21177">
    <property type="entry name" value="LPMO_AA10"/>
    <property type="match status" value="1"/>
</dbReference>
<dbReference type="Gene3D" id="2.70.50.50">
    <property type="entry name" value="chitin-binding protein cbp21"/>
    <property type="match status" value="1"/>
</dbReference>
<dbReference type="InterPro" id="IPR004302">
    <property type="entry name" value="Cellulose/chitin-bd_N"/>
</dbReference>
<dbReference type="InterPro" id="IPR051024">
    <property type="entry name" value="GlcNAc_Chitin_IntDeg"/>
</dbReference>
<dbReference type="InterPro" id="IPR014756">
    <property type="entry name" value="Ig_E-set"/>
</dbReference>
<dbReference type="PANTHER" id="PTHR34823:SF1">
    <property type="entry name" value="CHITIN-BINDING TYPE-4 DOMAIN-CONTAINING PROTEIN"/>
    <property type="match status" value="1"/>
</dbReference>
<dbReference type="PANTHER" id="PTHR34823">
    <property type="entry name" value="GLCNAC-BINDING PROTEIN A"/>
    <property type="match status" value="1"/>
</dbReference>
<dbReference type="Pfam" id="PF03067">
    <property type="entry name" value="LPMO_10"/>
    <property type="match status" value="1"/>
</dbReference>
<dbReference type="SUPFAM" id="SSF81296">
    <property type="entry name" value="E set domains"/>
    <property type="match status" value="1"/>
</dbReference>
<comment type="function">
    <text evidence="6">Lytic polysaccharide monooxygenase (LPMO) that oxidatively cleaves alpha- and beta-chitin with C1 regioselectivity (PubMed:37702503). Catalysis by LPMOs requires the reduction of the active-site copper from Cu(II) to Cu(I) by a reducing agent and H(2)O(2) or O(2) as a cosubstrate (PubMed:37702503). Exhibits enzymatic activity on U.maydis fungal cell wall chitin and Boosts chitin hydrolysis by chitinase GH18A (PubMed:37702503).</text>
</comment>
<comment type="cofactor">
    <cofactor evidence="2">
        <name>Cu(2+)</name>
        <dbReference type="ChEBI" id="CHEBI:29036"/>
    </cofactor>
    <text evidence="2">Binds 1 copper ion per subunit.</text>
</comment>
<comment type="subcellular location">
    <subcellularLocation>
        <location evidence="9">Secreted</location>
    </subcellularLocation>
</comment>
<comment type="similarity">
    <text evidence="8">Belongs to the polysaccharide monooxygenase AA10 family.</text>
</comment>
<protein>
    <recommendedName>
        <fullName evidence="7">AA10 family lytic polysaccharide monooxygenase C</fullName>
        <shortName evidence="7">AAC10</shortName>
        <ecNumber evidence="6">1.14.99.-</ecNumber>
    </recommendedName>
</protein>
<organism>
    <name type="scientific">Mycosarcoma maydis</name>
    <name type="common">Corn smut fungus</name>
    <name type="synonym">Ustilago maydis</name>
    <dbReference type="NCBI Taxonomy" id="5270"/>
    <lineage>
        <taxon>Eukaryota</taxon>
        <taxon>Fungi</taxon>
        <taxon>Dikarya</taxon>
        <taxon>Basidiomycota</taxon>
        <taxon>Ustilaginomycotina</taxon>
        <taxon>Ustilaginomycetes</taxon>
        <taxon>Ustilaginales</taxon>
        <taxon>Ustilaginaceae</taxon>
        <taxon>Mycosarcoma</taxon>
    </lineage>
</organism>
<accession>A0A0D1CHL0</accession>
<name>LP10_MYCMD</name>
<feature type="signal peptide" evidence="3">
    <location>
        <begin position="1"/>
        <end position="32"/>
    </location>
</feature>
<feature type="chain" id="PRO_0000460148" description="AA10 family lytic polysaccharide monooxygenase C">
    <location>
        <begin position="33"/>
        <end position="326"/>
    </location>
</feature>
<feature type="domain" description="Chitin-binding type-4" evidence="3">
    <location>
        <begin position="33"/>
        <end position="200"/>
    </location>
</feature>
<feature type="region of interest" description="Disordered" evidence="5">
    <location>
        <begin position="206"/>
        <end position="326"/>
    </location>
</feature>
<feature type="compositionally biased region" description="Low complexity" evidence="5">
    <location>
        <begin position="207"/>
        <end position="281"/>
    </location>
</feature>
<feature type="binding site" evidence="1">
    <location>
        <position position="33"/>
    </location>
    <ligand>
        <name>Cu(2+)</name>
        <dbReference type="ChEBI" id="CHEBI:29036"/>
    </ligand>
</feature>
<feature type="binding site" evidence="1">
    <location>
        <position position="118"/>
    </location>
    <ligand>
        <name>Cu(2+)</name>
        <dbReference type="ChEBI" id="CHEBI:29036"/>
    </ligand>
</feature>
<feature type="glycosylation site" description="N-linked (GlcNAc...) asparagine" evidence="4">
    <location>
        <position position="206"/>
    </location>
</feature>
<feature type="glycosylation site" description="N-linked (GlcNAc...) asparagine" evidence="4">
    <location>
        <position position="215"/>
    </location>
</feature>
<feature type="glycosylation site" description="N-linked (GlcNAc...) asparagine" evidence="4">
    <location>
        <position position="266"/>
    </location>
</feature>
<feature type="glycosylation site" description="N-linked (GlcNAc...) asparagine" evidence="4">
    <location>
        <position position="303"/>
    </location>
</feature>
<feature type="disulfide bond" evidence="1">
    <location>
        <begin position="81"/>
        <end position="197"/>
    </location>
</feature>
<gene>
    <name type="ORF">UMAG_05439</name>
</gene>